<organism>
    <name type="scientific">Synechocystis sp. (strain ATCC 27184 / PCC 6803 / Kazusa)</name>
    <dbReference type="NCBI Taxonomy" id="1111708"/>
    <lineage>
        <taxon>Bacteria</taxon>
        <taxon>Bacillati</taxon>
        <taxon>Cyanobacteriota</taxon>
        <taxon>Cyanophyceae</taxon>
        <taxon>Synechococcales</taxon>
        <taxon>Merismopediaceae</taxon>
        <taxon>Synechocystis</taxon>
    </lineage>
</organism>
<proteinExistence type="inferred from homology"/>
<keyword id="KW-1185">Reference proteome</keyword>
<keyword id="KW-0687">Ribonucleoprotein</keyword>
<keyword id="KW-0689">Ribosomal protein</keyword>
<keyword id="KW-0694">RNA-binding</keyword>
<keyword id="KW-0699">rRNA-binding</keyword>
<evidence type="ECO:0000250" key="1"/>
<evidence type="ECO:0000305" key="2"/>
<name>RL20_SYNY3</name>
<sequence length="117" mass="13553">MTRVKRGNVARKRRKKILKLAKGFRGSHSKLFRTANQQVMKALRNAYRDRRKRKRDFRRLWITRINAAARQEGMSYSKLTGQLKKANIEINRKMLAQLAVLDPAAFSEVVKVAATAK</sequence>
<accession>P48957</accession>
<protein>
    <recommendedName>
        <fullName evidence="2">Large ribosomal subunit protein bL20</fullName>
    </recommendedName>
    <alternativeName>
        <fullName>50S ribosomal protein L20</fullName>
    </alternativeName>
</protein>
<gene>
    <name type="primary">rplT</name>
    <name type="synonym">rpl20</name>
    <name type="ordered locus">sll0767</name>
</gene>
<dbReference type="EMBL" id="BA000022">
    <property type="protein sequence ID" value="BAA10121.1"/>
    <property type="molecule type" value="Genomic_DNA"/>
</dbReference>
<dbReference type="PIR" id="S76269">
    <property type="entry name" value="S76269"/>
</dbReference>
<dbReference type="SMR" id="P48957"/>
<dbReference type="FunCoup" id="P48957">
    <property type="interactions" value="438"/>
</dbReference>
<dbReference type="IntAct" id="P48957">
    <property type="interactions" value="2"/>
</dbReference>
<dbReference type="STRING" id="1148.gene:10499613"/>
<dbReference type="PaxDb" id="1148-1001496"/>
<dbReference type="EnsemblBacteria" id="BAA10121">
    <property type="protein sequence ID" value="BAA10121"/>
    <property type="gene ID" value="BAA10121"/>
</dbReference>
<dbReference type="KEGG" id="syn:sll0767"/>
<dbReference type="eggNOG" id="COG0292">
    <property type="taxonomic scope" value="Bacteria"/>
</dbReference>
<dbReference type="InParanoid" id="P48957"/>
<dbReference type="PhylomeDB" id="P48957"/>
<dbReference type="Proteomes" id="UP000001425">
    <property type="component" value="Chromosome"/>
</dbReference>
<dbReference type="GO" id="GO:0022625">
    <property type="term" value="C:cytosolic large ribosomal subunit"/>
    <property type="evidence" value="ECO:0000318"/>
    <property type="project" value="GO_Central"/>
</dbReference>
<dbReference type="GO" id="GO:0019843">
    <property type="term" value="F:rRNA binding"/>
    <property type="evidence" value="ECO:0007669"/>
    <property type="project" value="UniProtKB-UniRule"/>
</dbReference>
<dbReference type="GO" id="GO:0003735">
    <property type="term" value="F:structural constituent of ribosome"/>
    <property type="evidence" value="ECO:0000318"/>
    <property type="project" value="GO_Central"/>
</dbReference>
<dbReference type="GO" id="GO:0000027">
    <property type="term" value="P:ribosomal large subunit assembly"/>
    <property type="evidence" value="ECO:0007669"/>
    <property type="project" value="UniProtKB-UniRule"/>
</dbReference>
<dbReference type="GO" id="GO:0006412">
    <property type="term" value="P:translation"/>
    <property type="evidence" value="ECO:0007669"/>
    <property type="project" value="InterPro"/>
</dbReference>
<dbReference type="CDD" id="cd07026">
    <property type="entry name" value="Ribosomal_L20"/>
    <property type="match status" value="1"/>
</dbReference>
<dbReference type="FunFam" id="1.10.1900.20:FF:000001">
    <property type="entry name" value="50S ribosomal protein L20"/>
    <property type="match status" value="1"/>
</dbReference>
<dbReference type="Gene3D" id="6.10.160.10">
    <property type="match status" value="1"/>
</dbReference>
<dbReference type="Gene3D" id="1.10.1900.20">
    <property type="entry name" value="Ribosomal protein L20"/>
    <property type="match status" value="1"/>
</dbReference>
<dbReference type="HAMAP" id="MF_00382">
    <property type="entry name" value="Ribosomal_bL20"/>
    <property type="match status" value="1"/>
</dbReference>
<dbReference type="InterPro" id="IPR005813">
    <property type="entry name" value="Ribosomal_bL20"/>
</dbReference>
<dbReference type="InterPro" id="IPR049946">
    <property type="entry name" value="RIBOSOMAL_L20_CS"/>
</dbReference>
<dbReference type="InterPro" id="IPR035566">
    <property type="entry name" value="Ribosomal_protein_bL20_C"/>
</dbReference>
<dbReference type="NCBIfam" id="TIGR01032">
    <property type="entry name" value="rplT_bact"/>
    <property type="match status" value="1"/>
</dbReference>
<dbReference type="PANTHER" id="PTHR10986">
    <property type="entry name" value="39S RIBOSOMAL PROTEIN L20"/>
    <property type="match status" value="1"/>
</dbReference>
<dbReference type="Pfam" id="PF00453">
    <property type="entry name" value="Ribosomal_L20"/>
    <property type="match status" value="1"/>
</dbReference>
<dbReference type="PRINTS" id="PR00062">
    <property type="entry name" value="RIBOSOMALL20"/>
</dbReference>
<dbReference type="SUPFAM" id="SSF74731">
    <property type="entry name" value="Ribosomal protein L20"/>
    <property type="match status" value="1"/>
</dbReference>
<dbReference type="PROSITE" id="PS00937">
    <property type="entry name" value="RIBOSOMAL_L20"/>
    <property type="match status" value="1"/>
</dbReference>
<feature type="chain" id="PRO_0000177247" description="Large ribosomal subunit protein bL20">
    <location>
        <begin position="1"/>
        <end position="117"/>
    </location>
</feature>
<reference key="1">
    <citation type="journal article" date="1995" name="DNA Res.">
        <title>Sequence analysis of the genome of the unicellular cyanobacterium Synechocystis sp. strain PCC6803. I. Sequence features in the 1 Mb region from map positions 64% to 92% of the genome.</title>
        <authorList>
            <person name="Kaneko T."/>
            <person name="Tanaka A."/>
            <person name="Sato S."/>
            <person name="Kotani H."/>
            <person name="Sazuka T."/>
            <person name="Miyajima N."/>
            <person name="Sugiura M."/>
            <person name="Tabata S."/>
        </authorList>
    </citation>
    <scope>NUCLEOTIDE SEQUENCE [LARGE SCALE GENOMIC DNA]</scope>
    <source>
        <strain>ATCC 27184 / PCC 6803 / N-1</strain>
    </source>
</reference>
<reference key="2">
    <citation type="journal article" date="1996" name="DNA Res.">
        <title>Sequence analysis of the genome of the unicellular cyanobacterium Synechocystis sp. strain PCC6803. II. Sequence determination of the entire genome and assignment of potential protein-coding regions.</title>
        <authorList>
            <person name="Kaneko T."/>
            <person name="Sato S."/>
            <person name="Kotani H."/>
            <person name="Tanaka A."/>
            <person name="Asamizu E."/>
            <person name="Nakamura Y."/>
            <person name="Miyajima N."/>
            <person name="Hirosawa M."/>
            <person name="Sugiura M."/>
            <person name="Sasamoto S."/>
            <person name="Kimura T."/>
            <person name="Hosouchi T."/>
            <person name="Matsuno A."/>
            <person name="Muraki A."/>
            <person name="Nakazaki N."/>
            <person name="Naruo K."/>
            <person name="Okumura S."/>
            <person name="Shimpo S."/>
            <person name="Takeuchi C."/>
            <person name="Wada T."/>
            <person name="Watanabe A."/>
            <person name="Yamada M."/>
            <person name="Yasuda M."/>
            <person name="Tabata S."/>
        </authorList>
    </citation>
    <scope>NUCLEOTIDE SEQUENCE [LARGE SCALE GENOMIC DNA]</scope>
    <source>
        <strain>ATCC 27184 / PCC 6803 / Kazusa</strain>
    </source>
</reference>
<comment type="function">
    <text evidence="1">Binds directly to 23S ribosomal RNA and is necessary for the in vitro assembly process of the 50S ribosomal subunit. It is not involved in the protein synthesizing functions of that subunit (By similarity).</text>
</comment>
<comment type="similarity">
    <text evidence="2">Belongs to the bacterial ribosomal protein bL20 family.</text>
</comment>